<name>MTC6_KOMPG</name>
<keyword id="KW-0325">Glycoprotein</keyword>
<keyword id="KW-0472">Membrane</keyword>
<keyword id="KW-1185">Reference proteome</keyword>
<keyword id="KW-0732">Signal</keyword>
<keyword id="KW-0812">Transmembrane</keyword>
<keyword id="KW-1133">Transmembrane helix</keyword>
<sequence>MIIAFFLLIQCVYCVIWPPLSVDNEVALRSQRDVSYNVSVDQLVDVGVRLSTVIFERDTYTQPYLNRVDNLLNASVGNILIDAYWDEGGFNWQLCPAPFSANVTPIADGSTILQLEWDNKQYTCDRRLDLASIFTRIDEHIRASARSVSLNLITIYMSLHSIGTQNPTPVSQPGTLSRPLVRSIDQVQILTPASLRVAQLSNSTYQGLEFDPNGYPILGELLQSRGIRVIPIILENNMYEDTSYELERDSNLYFIQNSTIDVTQTNTADTKLTDLTTNITNWTIADSQALLSESFRLVMETEEDPFSLESYTNHISHGYSPFLNRKYNESEIRQFAVNRLWSWKNSYLPEVSVPLLGDQDDSNSANETLQCASFSNLSWIISSCDEPRQVACRNSSYWLQWTVTSTLSNYYGATEACPVGTFFDIPRTPLDSMTLQREIPLNSSVWIDLNTLDSGGCWISGGAEAECPYHRVTLVSLYVEILTPSSVVSIVLIAIVVLLHFVRIPIQKNRKYWRKLQDNIKDSDGIPS</sequence>
<organism>
    <name type="scientific">Komagataella phaffii (strain GS115 / ATCC 20864)</name>
    <name type="common">Yeast</name>
    <name type="synonym">Pichia pastoris</name>
    <dbReference type="NCBI Taxonomy" id="644223"/>
    <lineage>
        <taxon>Eukaryota</taxon>
        <taxon>Fungi</taxon>
        <taxon>Dikarya</taxon>
        <taxon>Ascomycota</taxon>
        <taxon>Saccharomycotina</taxon>
        <taxon>Pichiomycetes</taxon>
        <taxon>Pichiales</taxon>
        <taxon>Pichiaceae</taxon>
        <taxon>Komagataella</taxon>
    </lineage>
</organism>
<proteinExistence type="inferred from homology"/>
<gene>
    <name type="primary">MTC6</name>
    <name type="ordered locus">PAS_chr1-4_0474</name>
</gene>
<reference key="1">
    <citation type="journal article" date="2009" name="Nat. Biotechnol.">
        <title>Genome sequence of the recombinant protein production host Pichia pastoris.</title>
        <authorList>
            <person name="De Schutter K."/>
            <person name="Lin Y.-C."/>
            <person name="Tiels P."/>
            <person name="Van Hecke A."/>
            <person name="Glinka S."/>
            <person name="Weber-Lehmann J."/>
            <person name="Rouze P."/>
            <person name="Van de Peer Y."/>
            <person name="Callewaert N."/>
        </authorList>
    </citation>
    <scope>NUCLEOTIDE SEQUENCE [LARGE SCALE GENOMIC DNA]</scope>
    <source>
        <strain>GS115 / ATCC 20864</strain>
    </source>
</reference>
<comment type="function">
    <text evidence="1">May be involved in telomere capping.</text>
</comment>
<comment type="subcellular location">
    <subcellularLocation>
        <location evidence="3">Membrane</location>
        <topology evidence="3">Single-pass type I membrane protein</topology>
    </subcellularLocation>
</comment>
<comment type="similarity">
    <text evidence="3">Belongs to the MTC6 family.</text>
</comment>
<feature type="signal peptide" evidence="2">
    <location>
        <begin position="1"/>
        <end position="14"/>
    </location>
</feature>
<feature type="chain" id="PRO_0000407782" description="Maintenance of telomere capping protein 6">
    <location>
        <begin position="15"/>
        <end position="528"/>
    </location>
</feature>
<feature type="topological domain" description="Extracellular" evidence="2">
    <location>
        <begin position="15"/>
        <end position="480"/>
    </location>
</feature>
<feature type="transmembrane region" description="Helical" evidence="2">
    <location>
        <begin position="481"/>
        <end position="501"/>
    </location>
</feature>
<feature type="topological domain" description="Cytoplasmic" evidence="2">
    <location>
        <begin position="502"/>
        <end position="528"/>
    </location>
</feature>
<feature type="glycosylation site" description="N-linked (GlcNAc...) asparagine" evidence="2">
    <location>
        <position position="37"/>
    </location>
</feature>
<feature type="glycosylation site" description="N-linked (GlcNAc...) asparagine" evidence="2">
    <location>
        <position position="73"/>
    </location>
</feature>
<feature type="glycosylation site" description="N-linked (GlcNAc...) asparagine" evidence="2">
    <location>
        <position position="202"/>
    </location>
</feature>
<feature type="glycosylation site" description="N-linked (GlcNAc...) asparagine" evidence="2">
    <location>
        <position position="257"/>
    </location>
</feature>
<feature type="glycosylation site" description="N-linked (GlcNAc...) asparagine" evidence="2">
    <location>
        <position position="278"/>
    </location>
</feature>
<feature type="glycosylation site" description="N-linked (GlcNAc...) asparagine" evidence="2">
    <location>
        <position position="281"/>
    </location>
</feature>
<feature type="glycosylation site" description="N-linked (GlcNAc...) asparagine" evidence="2">
    <location>
        <position position="328"/>
    </location>
</feature>
<feature type="glycosylation site" description="N-linked (GlcNAc...) asparagine" evidence="2">
    <location>
        <position position="366"/>
    </location>
</feature>
<feature type="glycosylation site" description="N-linked (GlcNAc...) asparagine" evidence="2">
    <location>
        <position position="376"/>
    </location>
</feature>
<feature type="glycosylation site" description="N-linked (GlcNAc...) asparagine" evidence="2">
    <location>
        <position position="394"/>
    </location>
</feature>
<feature type="glycosylation site" description="N-linked (GlcNAc...) asparagine" evidence="2">
    <location>
        <position position="442"/>
    </location>
</feature>
<evidence type="ECO:0000250" key="1"/>
<evidence type="ECO:0000255" key="2"/>
<evidence type="ECO:0000305" key="3"/>
<dbReference type="EMBL" id="FN392319">
    <property type="protein sequence ID" value="CAY68326.1"/>
    <property type="molecule type" value="Genomic_DNA"/>
</dbReference>
<dbReference type="RefSeq" id="XP_002490607.1">
    <property type="nucleotide sequence ID" value="XM_002490562.1"/>
</dbReference>
<dbReference type="FunCoup" id="C4QYK3">
    <property type="interactions" value="16"/>
</dbReference>
<dbReference type="STRING" id="644223.C4QYK3"/>
<dbReference type="GlyCosmos" id="C4QYK3">
    <property type="glycosylation" value="11 sites, No reported glycans"/>
</dbReference>
<dbReference type="EnsemblFungi" id="CAY68326">
    <property type="protein sequence ID" value="CAY68326"/>
    <property type="gene ID" value="PAS_chr1-4_0474"/>
</dbReference>
<dbReference type="GeneID" id="8197062"/>
<dbReference type="KEGG" id="ppa:PAS_chr1-4_0474"/>
<dbReference type="eggNOG" id="ENOG502QVFP">
    <property type="taxonomic scope" value="Eukaryota"/>
</dbReference>
<dbReference type="HOGENOM" id="CLU_033723_0_0_1"/>
<dbReference type="InParanoid" id="C4QYK3"/>
<dbReference type="OMA" id="EVANCHE"/>
<dbReference type="OrthoDB" id="5573651at2759"/>
<dbReference type="Proteomes" id="UP000000314">
    <property type="component" value="Chromosome 1"/>
</dbReference>
<dbReference type="GO" id="GO:0016020">
    <property type="term" value="C:membrane"/>
    <property type="evidence" value="ECO:0007669"/>
    <property type="project" value="UniProtKB-SubCell"/>
</dbReference>
<dbReference type="InterPro" id="IPR051008">
    <property type="entry name" value="Telomere_Capping_Maintenance"/>
</dbReference>
<dbReference type="PANTHER" id="PTHR35518:SF2">
    <property type="entry name" value="MAINTENANCE OF TELOMERE CAPPING PROTEIN 6"/>
    <property type="match status" value="1"/>
</dbReference>
<dbReference type="PANTHER" id="PTHR35518">
    <property type="entry name" value="MAINTENANCE OF TELOMOERE CAPPING"/>
    <property type="match status" value="1"/>
</dbReference>
<dbReference type="Pfam" id="PF25506">
    <property type="entry name" value="TIM-barrel_MTC6"/>
    <property type="match status" value="1"/>
</dbReference>
<accession>C4QYK3</accession>
<protein>
    <recommendedName>
        <fullName>Maintenance of telomere capping protein 6</fullName>
    </recommendedName>
</protein>